<comment type="function">
    <text evidence="1">Required for the first step of histidine biosynthesis. May allow the feedback regulation of ATP phosphoribosyltransferase activity by histidine.</text>
</comment>
<comment type="pathway">
    <text evidence="1">Amino-acid biosynthesis; L-histidine biosynthesis; L-histidine from 5-phospho-alpha-D-ribose 1-diphosphate: step 1/9.</text>
</comment>
<comment type="subunit">
    <text evidence="1">Heteromultimer composed of HisG and HisZ subunits.</text>
</comment>
<comment type="subcellular location">
    <subcellularLocation>
        <location evidence="1">Cytoplasm</location>
    </subcellularLocation>
</comment>
<comment type="miscellaneous">
    <text>This function is generally fulfilled by the C-terminal part of HisG, which is missing in some bacteria such as this one.</text>
</comment>
<comment type="similarity">
    <text evidence="1">Belongs to the class-II aminoacyl-tRNA synthetase family. HisZ subfamily.</text>
</comment>
<organism>
    <name type="scientific">Lacticaseibacillus paracasei (strain ATCC 334 / BCRC 17002 / CCUG 31169 / CIP 107868 / KCTC 3260 / NRRL B-441)</name>
    <name type="common">Lactobacillus paracasei</name>
    <dbReference type="NCBI Taxonomy" id="321967"/>
    <lineage>
        <taxon>Bacteria</taxon>
        <taxon>Bacillati</taxon>
        <taxon>Bacillota</taxon>
        <taxon>Bacilli</taxon>
        <taxon>Lactobacillales</taxon>
        <taxon>Lactobacillaceae</taxon>
        <taxon>Lacticaseibacillus</taxon>
    </lineage>
</organism>
<evidence type="ECO:0000255" key="1">
    <source>
        <dbReference type="HAMAP-Rule" id="MF_00125"/>
    </source>
</evidence>
<dbReference type="EMBL" id="CP000423">
    <property type="protein sequence ID" value="ABJ70213.1"/>
    <property type="molecule type" value="Genomic_DNA"/>
</dbReference>
<dbReference type="RefSeq" id="WP_011674507.1">
    <property type="nucleotide sequence ID" value="NC_008526.1"/>
</dbReference>
<dbReference type="RefSeq" id="YP_806655.1">
    <property type="nucleotide sequence ID" value="NC_008526.1"/>
</dbReference>
<dbReference type="SMR" id="Q039A9"/>
<dbReference type="STRING" id="321967.LSEI_1435"/>
<dbReference type="PaxDb" id="321967-LSEI_1435"/>
<dbReference type="KEGG" id="lca:LSEI_1435"/>
<dbReference type="PATRIC" id="fig|321967.11.peg.1415"/>
<dbReference type="HOGENOM" id="CLU_025113_0_0_9"/>
<dbReference type="UniPathway" id="UPA00031">
    <property type="reaction ID" value="UER00006"/>
</dbReference>
<dbReference type="Proteomes" id="UP000001651">
    <property type="component" value="Chromosome"/>
</dbReference>
<dbReference type="GO" id="GO:0005737">
    <property type="term" value="C:cytoplasm"/>
    <property type="evidence" value="ECO:0007669"/>
    <property type="project" value="UniProtKB-SubCell"/>
</dbReference>
<dbReference type="GO" id="GO:0140096">
    <property type="term" value="F:catalytic activity, acting on a protein"/>
    <property type="evidence" value="ECO:0007669"/>
    <property type="project" value="UniProtKB-ARBA"/>
</dbReference>
<dbReference type="GO" id="GO:0004821">
    <property type="term" value="F:histidine-tRNA ligase activity"/>
    <property type="evidence" value="ECO:0007669"/>
    <property type="project" value="TreeGrafter"/>
</dbReference>
<dbReference type="GO" id="GO:0016740">
    <property type="term" value="F:transferase activity"/>
    <property type="evidence" value="ECO:0007669"/>
    <property type="project" value="UniProtKB-ARBA"/>
</dbReference>
<dbReference type="GO" id="GO:0006427">
    <property type="term" value="P:histidyl-tRNA aminoacylation"/>
    <property type="evidence" value="ECO:0007669"/>
    <property type="project" value="TreeGrafter"/>
</dbReference>
<dbReference type="GO" id="GO:0000105">
    <property type="term" value="P:L-histidine biosynthetic process"/>
    <property type="evidence" value="ECO:0007669"/>
    <property type="project" value="UniProtKB-UniRule"/>
</dbReference>
<dbReference type="CDD" id="cd00773">
    <property type="entry name" value="HisRS-like_core"/>
    <property type="match status" value="1"/>
</dbReference>
<dbReference type="Gene3D" id="3.30.930.10">
    <property type="entry name" value="Bira Bifunctional Protein, Domain 2"/>
    <property type="match status" value="1"/>
</dbReference>
<dbReference type="HAMAP" id="MF_00125">
    <property type="entry name" value="HisZ"/>
    <property type="match status" value="1"/>
</dbReference>
<dbReference type="InterPro" id="IPR045864">
    <property type="entry name" value="aa-tRNA-synth_II/BPL/LPL"/>
</dbReference>
<dbReference type="InterPro" id="IPR041715">
    <property type="entry name" value="HisRS-like_core"/>
</dbReference>
<dbReference type="InterPro" id="IPR004516">
    <property type="entry name" value="HisRS/HisZ"/>
</dbReference>
<dbReference type="InterPro" id="IPR004517">
    <property type="entry name" value="HisZ"/>
</dbReference>
<dbReference type="PANTHER" id="PTHR43707:SF6">
    <property type="entry name" value="ATP PHOSPHORIBOSYLTRANSFERASE REGULATORY SUBUNIT"/>
    <property type="match status" value="1"/>
</dbReference>
<dbReference type="PANTHER" id="PTHR43707">
    <property type="entry name" value="HISTIDYL-TRNA SYNTHETASE"/>
    <property type="match status" value="1"/>
</dbReference>
<dbReference type="Pfam" id="PF13393">
    <property type="entry name" value="tRNA-synt_His"/>
    <property type="match status" value="1"/>
</dbReference>
<dbReference type="PIRSF" id="PIRSF001549">
    <property type="entry name" value="His-tRNA_synth"/>
    <property type="match status" value="1"/>
</dbReference>
<dbReference type="SUPFAM" id="SSF55681">
    <property type="entry name" value="Class II aaRS and biotin synthetases"/>
    <property type="match status" value="1"/>
</dbReference>
<reference key="1">
    <citation type="journal article" date="2006" name="Proc. Natl. Acad. Sci. U.S.A.">
        <title>Comparative genomics of the lactic acid bacteria.</title>
        <authorList>
            <person name="Makarova K.S."/>
            <person name="Slesarev A."/>
            <person name="Wolf Y.I."/>
            <person name="Sorokin A."/>
            <person name="Mirkin B."/>
            <person name="Koonin E.V."/>
            <person name="Pavlov A."/>
            <person name="Pavlova N."/>
            <person name="Karamychev V."/>
            <person name="Polouchine N."/>
            <person name="Shakhova V."/>
            <person name="Grigoriev I."/>
            <person name="Lou Y."/>
            <person name="Rohksar D."/>
            <person name="Lucas S."/>
            <person name="Huang K."/>
            <person name="Goodstein D.M."/>
            <person name="Hawkins T."/>
            <person name="Plengvidhya V."/>
            <person name="Welker D."/>
            <person name="Hughes J."/>
            <person name="Goh Y."/>
            <person name="Benson A."/>
            <person name="Baldwin K."/>
            <person name="Lee J.-H."/>
            <person name="Diaz-Muniz I."/>
            <person name="Dosti B."/>
            <person name="Smeianov V."/>
            <person name="Wechter W."/>
            <person name="Barabote R."/>
            <person name="Lorca G."/>
            <person name="Altermann E."/>
            <person name="Barrangou R."/>
            <person name="Ganesan B."/>
            <person name="Xie Y."/>
            <person name="Rawsthorne H."/>
            <person name="Tamir D."/>
            <person name="Parker C."/>
            <person name="Breidt F."/>
            <person name="Broadbent J.R."/>
            <person name="Hutkins R."/>
            <person name="O'Sullivan D."/>
            <person name="Steele J."/>
            <person name="Unlu G."/>
            <person name="Saier M.H. Jr."/>
            <person name="Klaenhammer T."/>
            <person name="Richardson P."/>
            <person name="Kozyavkin S."/>
            <person name="Weimer B.C."/>
            <person name="Mills D.A."/>
        </authorList>
    </citation>
    <scope>NUCLEOTIDE SEQUENCE [LARGE SCALE GENOMIC DNA]</scope>
    <source>
        <strain>ATCC 334 / BCRC 17002 / CCUG 31169 / CIP 107868 / KCTC 3260 / NRRL B-441</strain>
    </source>
</reference>
<feature type="chain" id="PRO_1000016264" description="ATP phosphoribosyltransferase regulatory subunit">
    <location>
        <begin position="1"/>
        <end position="382"/>
    </location>
</feature>
<gene>
    <name evidence="1" type="primary">hisZ</name>
    <name type="ordered locus">LSEI_1435</name>
</gene>
<protein>
    <recommendedName>
        <fullName evidence="1">ATP phosphoribosyltransferase regulatory subunit</fullName>
    </recommendedName>
</protein>
<proteinExistence type="inferred from homology"/>
<keyword id="KW-0028">Amino-acid biosynthesis</keyword>
<keyword id="KW-0963">Cytoplasm</keyword>
<keyword id="KW-0368">Histidine biosynthesis</keyword>
<keyword id="KW-1185">Reference proteome</keyword>
<name>HISZ_LACP3</name>
<accession>Q039A9</accession>
<sequence length="382" mass="42564">MSNRHLPIGTRDEFGPRAIRKENLIQTISQQFIQAGFERVKTPLLEYRDVFKPLAVSGEQPYQMLDDAGESVVMRPDLTLPLARLLSTTSIVPPVQWWYVGDIFRVKKSLSGTYNQITQAGIELIGYRSLKAEWACLSEAGKICRTLGLTHLTLELSDAQFVPQILRTLQLNDAAADAFQTAFFAKELSTYQDLIAPLATNPLYPFLQQWPWLFGDSETIFAELKRLLPSNVITDRLAPLQQTVAFLKGQFPELRVTIDLTSRPPQSYYTGIFFHAYVDGGHQYLFSGGRYDKLLASFQQELLPAVGLAFDIDAVTDQLPNAPDQPLTFVYGLPSQWQAAAAMVATTPNARLCLVDTLAEAQAAATKQHANLIDLSPKEAIL</sequence>